<comment type="function">
    <text evidence="2">Long-chain alkyl alcohol dehydrogenase that can oxidize a broad range of alkyl alcohols from ethanol to 1-triacontanol (C2 to C30) as well as 1,3-propanediol and acetaldehyde. The best substrate is ethanol. Also oxidizes glycerol.</text>
</comment>
<comment type="catalytic activity">
    <reaction evidence="2">
        <text>glycerol + NAD(+) = dihydroxyacetone + NADH + H(+)</text>
        <dbReference type="Rhea" id="RHEA:13769"/>
        <dbReference type="ChEBI" id="CHEBI:15378"/>
        <dbReference type="ChEBI" id="CHEBI:16016"/>
        <dbReference type="ChEBI" id="CHEBI:17754"/>
        <dbReference type="ChEBI" id="CHEBI:57540"/>
        <dbReference type="ChEBI" id="CHEBI:57945"/>
        <dbReference type="EC" id="1.1.1.6"/>
    </reaction>
</comment>
<comment type="catalytic activity">
    <reaction evidence="2">
        <text>a long-chain primary fatty alcohol + 2 NAD(+) + H2O = a long-chain fatty acid + 2 NADH + 3 H(+)</text>
        <dbReference type="Rhea" id="RHEA:17977"/>
        <dbReference type="ChEBI" id="CHEBI:15377"/>
        <dbReference type="ChEBI" id="CHEBI:15378"/>
        <dbReference type="ChEBI" id="CHEBI:57540"/>
        <dbReference type="ChEBI" id="CHEBI:57560"/>
        <dbReference type="ChEBI" id="CHEBI:57945"/>
        <dbReference type="ChEBI" id="CHEBI:77396"/>
        <dbReference type="EC" id="1.1.1.192"/>
    </reaction>
</comment>
<comment type="biophysicochemical properties">
    <kinetics>
        <KM evidence="2">7.55 mM for ethanol</KM>
        <KM evidence="2">4.71 mM for acetaldehyde</KM>
        <KM evidence="2">1.51 mM for NAD</KM>
        <KM evidence="2">1.4 mM for NADH</KM>
        <KM evidence="2">0.28 mM for NADP</KM>
        <text>kcat is 638.69 sec(-1) for ethanol. kcat is 404.77 sec(-1) for acetaldehyde. kcat is 443.05 sec(-1) for NAD. kcat is 1645.74 sec(-1) for NADH. kcat is 43.90 sec(-1) for NADP.</text>
    </kinetics>
    <phDependence>
        <text evidence="2">Optimum pH is 8.0.</text>
    </phDependence>
    <temperatureDependence>
        <text evidence="2">Optimum temperature is 60 degrees Celsius.</text>
    </temperatureDependence>
</comment>
<comment type="subunit">
    <text evidence="2">Homooctamer.</text>
</comment>
<comment type="similarity">
    <text evidence="3">Belongs to the iron-containing alcohol dehydrogenase family.</text>
</comment>
<comment type="caution">
    <text evidence="4">In contrast to other members of the family, it apparently does not use iron or other metals as cofactor.</text>
</comment>
<dbReference type="EC" id="1.1.1.192"/>
<dbReference type="EC" id="1.1.1.6"/>
<dbReference type="EMBL" id="CP000557">
    <property type="protein sequence ID" value="ABO67118.1"/>
    <property type="molecule type" value="Genomic_DNA"/>
</dbReference>
<dbReference type="RefSeq" id="WP_008880085.1">
    <property type="nucleotide sequence ID" value="NC_009328.1"/>
</dbReference>
<dbReference type="SMR" id="A4IP64"/>
<dbReference type="GeneID" id="87620691"/>
<dbReference type="KEGG" id="gtn:GTNG_1754"/>
<dbReference type="eggNOG" id="COG1454">
    <property type="taxonomic scope" value="Bacteria"/>
</dbReference>
<dbReference type="HOGENOM" id="CLU_007207_0_0_9"/>
<dbReference type="BRENDA" id="1.1.1.1">
    <property type="organism ID" value="705"/>
</dbReference>
<dbReference type="BRENDA" id="1.1.1.192">
    <property type="organism ID" value="705"/>
</dbReference>
<dbReference type="Proteomes" id="UP000001578">
    <property type="component" value="Chromosome"/>
</dbReference>
<dbReference type="GO" id="GO:0004022">
    <property type="term" value="F:alcohol dehydrogenase (NAD+) activity"/>
    <property type="evidence" value="ECO:0007669"/>
    <property type="project" value="TreeGrafter"/>
</dbReference>
<dbReference type="GO" id="GO:0008888">
    <property type="term" value="F:glycerol dehydrogenase (NAD+) activity"/>
    <property type="evidence" value="ECO:0007669"/>
    <property type="project" value="UniProtKB-EC"/>
</dbReference>
<dbReference type="GO" id="GO:0050060">
    <property type="term" value="F:long-chain-alcohol dehydrogenase activity"/>
    <property type="evidence" value="ECO:0007669"/>
    <property type="project" value="UniProtKB-EC"/>
</dbReference>
<dbReference type="GO" id="GO:0046872">
    <property type="term" value="F:metal ion binding"/>
    <property type="evidence" value="ECO:0007669"/>
    <property type="project" value="InterPro"/>
</dbReference>
<dbReference type="CDD" id="cd08551">
    <property type="entry name" value="Fe-ADH"/>
    <property type="match status" value="1"/>
</dbReference>
<dbReference type="FunFam" id="3.40.50.1970:FF:000003">
    <property type="entry name" value="Alcohol dehydrogenase, iron-containing"/>
    <property type="match status" value="1"/>
</dbReference>
<dbReference type="FunFam" id="1.20.1090.10:FF:000001">
    <property type="entry name" value="Aldehyde-alcohol dehydrogenase"/>
    <property type="match status" value="1"/>
</dbReference>
<dbReference type="Gene3D" id="3.40.50.1970">
    <property type="match status" value="1"/>
</dbReference>
<dbReference type="Gene3D" id="1.20.1090.10">
    <property type="entry name" value="Dehydroquinate synthase-like - alpha domain"/>
    <property type="match status" value="1"/>
</dbReference>
<dbReference type="InterPro" id="IPR001670">
    <property type="entry name" value="ADH_Fe/GldA"/>
</dbReference>
<dbReference type="InterPro" id="IPR056798">
    <property type="entry name" value="ADH_Fe_C"/>
</dbReference>
<dbReference type="InterPro" id="IPR018211">
    <property type="entry name" value="ADH_Fe_CS"/>
</dbReference>
<dbReference type="InterPro" id="IPR039697">
    <property type="entry name" value="Alcohol_dehydrogenase_Fe"/>
</dbReference>
<dbReference type="PANTHER" id="PTHR11496">
    <property type="entry name" value="ALCOHOL DEHYDROGENASE"/>
    <property type="match status" value="1"/>
</dbReference>
<dbReference type="PANTHER" id="PTHR11496:SF102">
    <property type="entry name" value="ALCOHOL DEHYDROGENASE 4"/>
    <property type="match status" value="1"/>
</dbReference>
<dbReference type="Pfam" id="PF25137">
    <property type="entry name" value="ADH_Fe_C"/>
    <property type="match status" value="1"/>
</dbReference>
<dbReference type="Pfam" id="PF00465">
    <property type="entry name" value="Fe-ADH"/>
    <property type="match status" value="1"/>
</dbReference>
<dbReference type="SUPFAM" id="SSF56796">
    <property type="entry name" value="Dehydroquinate synthase-like"/>
    <property type="match status" value="1"/>
</dbReference>
<dbReference type="PROSITE" id="PS00913">
    <property type="entry name" value="ADH_IRON_1"/>
    <property type="match status" value="1"/>
</dbReference>
<gene>
    <name type="primary">adh1</name>
    <name type="ordered locus">GTNG_1754</name>
</gene>
<organism>
    <name type="scientific">Geobacillus thermodenitrificans (strain NG80-2)</name>
    <dbReference type="NCBI Taxonomy" id="420246"/>
    <lineage>
        <taxon>Bacteria</taxon>
        <taxon>Bacillati</taxon>
        <taxon>Bacillota</taxon>
        <taxon>Bacilli</taxon>
        <taxon>Bacillales</taxon>
        <taxon>Anoxybacillaceae</taxon>
        <taxon>Geobacillus</taxon>
    </lineage>
</organism>
<name>ADH1_GEOTN</name>
<protein>
    <recommendedName>
        <fullName>Long-chain-alcohol dehydrogenase 1</fullName>
        <ecNumber>1.1.1.192</ecNumber>
    </recommendedName>
    <alternativeName>
        <fullName>Alcohol dehydrogenase 1</fullName>
        <shortName>ADH1</shortName>
    </alternativeName>
    <alternativeName>
        <fullName>Fatty alcohol oxidoreductase 1</fullName>
    </alternativeName>
    <alternativeName>
        <fullName>Glycerol dehydrogenase</fullName>
        <ecNumber>1.1.1.6</ecNumber>
    </alternativeName>
</protein>
<accession>A4IP64</accession>
<feature type="chain" id="PRO_0000430261" description="Long-chain-alcohol dehydrogenase 1">
    <location>
        <begin position="1"/>
        <end position="395"/>
    </location>
</feature>
<feature type="binding site" evidence="1">
    <location>
        <begin position="98"/>
        <end position="102"/>
    </location>
    <ligand>
        <name>NAD(+)</name>
        <dbReference type="ChEBI" id="CHEBI:57540"/>
    </ligand>
</feature>
<feature type="binding site" evidence="1">
    <location>
        <begin position="141"/>
        <end position="144"/>
    </location>
    <ligand>
        <name>NAD(+)</name>
        <dbReference type="ChEBI" id="CHEBI:57540"/>
    </ligand>
</feature>
<evidence type="ECO:0000250" key="1"/>
<evidence type="ECO:0000269" key="2">
    <source>
    </source>
</evidence>
<evidence type="ECO:0000305" key="3"/>
<evidence type="ECO:0000305" key="4">
    <source>
    </source>
</evidence>
<sequence>MSVARIVFPPLSHVGWGALDQLVPEVKRLGAKHILVITDPMLVKIGLVDQVTSPLRQEGYSVHVYTDVVPEPPLETGEKAVAFARDGKFDLVIGVGGGSALDLAKLAAVLAVHDGSVADYLNLTGTRTLEKKGLPKILIPTTSGTGSEVTNISVLSLETTKDVVTHDYLLADVAIVDPQLTVSVPPRVTAATGIDALTHAVEAYVSVNASPTSDGLAVAAIRLISRSLRKAVANGSDKQARIDMANGSYLAGLAFFNAGVAGVHALAYPLGGQFHIAHGESNAVLLPYVMGYIRQSCTKRMADIFNALGGNSSFLSEVEASYRCVEELERFVADVGIPKTLGGFGIPESALESLTKDAVQQKRLLARSPLPLLEADIRAIYEAAFAGTIVEPHKA</sequence>
<reference key="1">
    <citation type="journal article" date="2007" name="Proc. Natl. Acad. Sci. U.S.A.">
        <title>Genome and proteome of long-chain alkane degrading Geobacillus thermodenitrificans NG80-2 isolated from a deep-subsurface oil reservoir.</title>
        <authorList>
            <person name="Feng L."/>
            <person name="Wang W."/>
            <person name="Cheng J."/>
            <person name="Ren Y."/>
            <person name="Zhao G."/>
            <person name="Gao C."/>
            <person name="Tang Y."/>
            <person name="Liu X."/>
            <person name="Han W."/>
            <person name="Peng X."/>
            <person name="Liu R."/>
            <person name="Wang L."/>
        </authorList>
    </citation>
    <scope>NUCLEOTIDE SEQUENCE [LARGE SCALE GENOMIC DNA]</scope>
    <source>
        <strain>NG80-2</strain>
    </source>
</reference>
<reference key="2">
    <citation type="journal article" date="2009" name="Microbiology">
        <title>Two novel metal-independent long-chain alkyl alcohol dehydrogenases from Geobacillus thermodenitrificans NG80-2.</title>
        <authorList>
            <person name="Liu X."/>
            <person name="Dong Y."/>
            <person name="Zhang J."/>
            <person name="Zhang A."/>
            <person name="Wang L."/>
            <person name="Feng L."/>
        </authorList>
    </citation>
    <scope>FUNCTION</scope>
    <scope>CATALYTIC ACTIVITY</scope>
    <scope>SUBUNIT</scope>
    <scope>BIOPHYSICOCHEMICAL PROPERTIES</scope>
    <source>
        <strain>NG80-2</strain>
    </source>
</reference>
<reference key="3">
    <citation type="journal article" date="2014" name="PLoS ONE">
        <title>Finding sequences for over 270 orphan enzymes.</title>
        <authorList>
            <person name="Shearer A.G."/>
            <person name="Altman T."/>
            <person name="Rhee C.D."/>
        </authorList>
    </citation>
    <scope>IDENTIFICATION</scope>
</reference>
<keyword id="KW-0520">NAD</keyword>
<keyword id="KW-0560">Oxidoreductase</keyword>
<proteinExistence type="evidence at protein level"/>